<accession>C4ZBS3</accession>
<evidence type="ECO:0000255" key="1">
    <source>
        <dbReference type="HAMAP-Rule" id="MF_00531"/>
    </source>
</evidence>
<evidence type="ECO:0000305" key="2"/>
<comment type="function">
    <text evidence="1">Protein S19 forms a complex with S13 that binds strongly to the 16S ribosomal RNA.</text>
</comment>
<comment type="similarity">
    <text evidence="1">Belongs to the universal ribosomal protein uS19 family.</text>
</comment>
<feature type="chain" id="PRO_1000211805" description="Small ribosomal subunit protein uS19">
    <location>
        <begin position="1"/>
        <end position="93"/>
    </location>
</feature>
<organism>
    <name type="scientific">Agathobacter rectalis (strain ATCC 33656 / DSM 3377 / JCM 17463 / KCTC 5835 / VPI 0990)</name>
    <name type="common">Eubacterium rectale</name>
    <dbReference type="NCBI Taxonomy" id="515619"/>
    <lineage>
        <taxon>Bacteria</taxon>
        <taxon>Bacillati</taxon>
        <taxon>Bacillota</taxon>
        <taxon>Clostridia</taxon>
        <taxon>Lachnospirales</taxon>
        <taxon>Lachnospiraceae</taxon>
        <taxon>Agathobacter</taxon>
    </lineage>
</organism>
<gene>
    <name evidence="1" type="primary">rpsS</name>
    <name type="ordered locus">EUBREC_0422</name>
</gene>
<proteinExistence type="inferred from homology"/>
<reference key="1">
    <citation type="journal article" date="2009" name="Proc. Natl. Acad. Sci. U.S.A.">
        <title>Characterizing a model human gut microbiota composed of members of its two dominant bacterial phyla.</title>
        <authorList>
            <person name="Mahowald M.A."/>
            <person name="Rey F.E."/>
            <person name="Seedorf H."/>
            <person name="Turnbaugh P.J."/>
            <person name="Fulton R.S."/>
            <person name="Wollam A."/>
            <person name="Shah N."/>
            <person name="Wang C."/>
            <person name="Magrini V."/>
            <person name="Wilson R.K."/>
            <person name="Cantarel B.L."/>
            <person name="Coutinho P.M."/>
            <person name="Henrissat B."/>
            <person name="Crock L.W."/>
            <person name="Russell A."/>
            <person name="Verberkmoes N.C."/>
            <person name="Hettich R.L."/>
            <person name="Gordon J.I."/>
        </authorList>
    </citation>
    <scope>NUCLEOTIDE SEQUENCE [LARGE SCALE GENOMIC DNA]</scope>
    <source>
        <strain>ATCC 33656 / DSM 3377 / JCM 17463 / KCTC 5835 / LMG 30912 / VPI 0990</strain>
    </source>
</reference>
<dbReference type="EMBL" id="CP001107">
    <property type="protein sequence ID" value="ACR74213.1"/>
    <property type="molecule type" value="Genomic_DNA"/>
</dbReference>
<dbReference type="RefSeq" id="WP_012741331.1">
    <property type="nucleotide sequence ID" value="NZ_CAXSYD010000003.1"/>
</dbReference>
<dbReference type="SMR" id="C4ZBS3"/>
<dbReference type="STRING" id="515619.EUBREC_0422"/>
<dbReference type="PaxDb" id="515619-EUBREC_0422"/>
<dbReference type="GeneID" id="86987332"/>
<dbReference type="KEGG" id="ere:EUBREC_0422"/>
<dbReference type="HOGENOM" id="CLU_144911_0_1_9"/>
<dbReference type="Proteomes" id="UP000001477">
    <property type="component" value="Chromosome"/>
</dbReference>
<dbReference type="GO" id="GO:0005737">
    <property type="term" value="C:cytoplasm"/>
    <property type="evidence" value="ECO:0007669"/>
    <property type="project" value="UniProtKB-ARBA"/>
</dbReference>
<dbReference type="GO" id="GO:0015935">
    <property type="term" value="C:small ribosomal subunit"/>
    <property type="evidence" value="ECO:0007669"/>
    <property type="project" value="InterPro"/>
</dbReference>
<dbReference type="GO" id="GO:0019843">
    <property type="term" value="F:rRNA binding"/>
    <property type="evidence" value="ECO:0007669"/>
    <property type="project" value="UniProtKB-UniRule"/>
</dbReference>
<dbReference type="GO" id="GO:0003735">
    <property type="term" value="F:structural constituent of ribosome"/>
    <property type="evidence" value="ECO:0007669"/>
    <property type="project" value="InterPro"/>
</dbReference>
<dbReference type="GO" id="GO:0000028">
    <property type="term" value="P:ribosomal small subunit assembly"/>
    <property type="evidence" value="ECO:0007669"/>
    <property type="project" value="TreeGrafter"/>
</dbReference>
<dbReference type="GO" id="GO:0006412">
    <property type="term" value="P:translation"/>
    <property type="evidence" value="ECO:0007669"/>
    <property type="project" value="UniProtKB-UniRule"/>
</dbReference>
<dbReference type="FunFam" id="3.30.860.10:FF:000001">
    <property type="entry name" value="30S ribosomal protein S19"/>
    <property type="match status" value="1"/>
</dbReference>
<dbReference type="Gene3D" id="3.30.860.10">
    <property type="entry name" value="30s Ribosomal Protein S19, Chain A"/>
    <property type="match status" value="1"/>
</dbReference>
<dbReference type="HAMAP" id="MF_00531">
    <property type="entry name" value="Ribosomal_uS19"/>
    <property type="match status" value="1"/>
</dbReference>
<dbReference type="InterPro" id="IPR002222">
    <property type="entry name" value="Ribosomal_uS19"/>
</dbReference>
<dbReference type="InterPro" id="IPR005732">
    <property type="entry name" value="Ribosomal_uS19_bac-type"/>
</dbReference>
<dbReference type="InterPro" id="IPR020934">
    <property type="entry name" value="Ribosomal_uS19_CS"/>
</dbReference>
<dbReference type="InterPro" id="IPR023575">
    <property type="entry name" value="Ribosomal_uS19_SF"/>
</dbReference>
<dbReference type="NCBIfam" id="TIGR01050">
    <property type="entry name" value="rpsS_bact"/>
    <property type="match status" value="1"/>
</dbReference>
<dbReference type="PANTHER" id="PTHR11880">
    <property type="entry name" value="RIBOSOMAL PROTEIN S19P FAMILY MEMBER"/>
    <property type="match status" value="1"/>
</dbReference>
<dbReference type="PANTHER" id="PTHR11880:SF8">
    <property type="entry name" value="SMALL RIBOSOMAL SUBUNIT PROTEIN US19M"/>
    <property type="match status" value="1"/>
</dbReference>
<dbReference type="Pfam" id="PF00203">
    <property type="entry name" value="Ribosomal_S19"/>
    <property type="match status" value="1"/>
</dbReference>
<dbReference type="PIRSF" id="PIRSF002144">
    <property type="entry name" value="Ribosomal_S19"/>
    <property type="match status" value="1"/>
</dbReference>
<dbReference type="PRINTS" id="PR00975">
    <property type="entry name" value="RIBOSOMALS19"/>
</dbReference>
<dbReference type="SUPFAM" id="SSF54570">
    <property type="entry name" value="Ribosomal protein S19"/>
    <property type="match status" value="1"/>
</dbReference>
<dbReference type="PROSITE" id="PS00323">
    <property type="entry name" value="RIBOSOMAL_S19"/>
    <property type="match status" value="1"/>
</dbReference>
<keyword id="KW-0687">Ribonucleoprotein</keyword>
<keyword id="KW-0689">Ribosomal protein</keyword>
<keyword id="KW-0694">RNA-binding</keyword>
<keyword id="KW-0699">rRNA-binding</keyword>
<name>RS19_AGARV</name>
<sequence length="93" mass="10341">MARSLKKGPFADESLLKKVDAMNASGDKSVIKTWSRRSTIFPSFVGHTIAVHDGRKHVPVYVTEDMVGHKLGEFVATRTYRGHGKDEKKSGVR</sequence>
<protein>
    <recommendedName>
        <fullName evidence="1">Small ribosomal subunit protein uS19</fullName>
    </recommendedName>
    <alternativeName>
        <fullName evidence="2">30S ribosomal protein S19</fullName>
    </alternativeName>
</protein>